<protein>
    <recommendedName>
        <fullName evidence="1">tRNA uridine 5-carboxymethylaminomethyl modification enzyme MnmG</fullName>
    </recommendedName>
    <alternativeName>
        <fullName evidence="1">Glucose-inhibited division protein A</fullName>
    </alternativeName>
</protein>
<reference key="1">
    <citation type="journal article" date="2008" name="Genome Res.">
        <title>Chlamydia trachomatis: genome sequence analysis of lymphogranuloma venereum isolates.</title>
        <authorList>
            <person name="Thomson N.R."/>
            <person name="Holden M.T.G."/>
            <person name="Carder C."/>
            <person name="Lennard N."/>
            <person name="Lockey S.J."/>
            <person name="Marsh P."/>
            <person name="Skipp P."/>
            <person name="O'Connor C.D."/>
            <person name="Goodhead I."/>
            <person name="Norbertzcak H."/>
            <person name="Harris B."/>
            <person name="Ormond D."/>
            <person name="Rance R."/>
            <person name="Quail M.A."/>
            <person name="Parkhill J."/>
            <person name="Stephens R.S."/>
            <person name="Clarke I.N."/>
        </authorList>
    </citation>
    <scope>NUCLEOTIDE SEQUENCE [LARGE SCALE GENOMIC DNA]</scope>
    <source>
        <strain>UCH-1/proctitis</strain>
    </source>
</reference>
<proteinExistence type="inferred from homology"/>
<keyword id="KW-0963">Cytoplasm</keyword>
<keyword id="KW-0274">FAD</keyword>
<keyword id="KW-0285">Flavoprotein</keyword>
<keyword id="KW-0520">NAD</keyword>
<keyword id="KW-0819">tRNA processing</keyword>
<name>MNMG_CHLTB</name>
<dbReference type="EMBL" id="AM884177">
    <property type="protein sequence ID" value="CAP07152.1"/>
    <property type="molecule type" value="Genomic_DNA"/>
</dbReference>
<dbReference type="RefSeq" id="WP_009873860.1">
    <property type="nucleotide sequence ID" value="NC_010280.2"/>
</dbReference>
<dbReference type="SMR" id="B0BCD7"/>
<dbReference type="KEGG" id="ctl:CTLon_0755"/>
<dbReference type="HOGENOM" id="CLU_007831_2_2_0"/>
<dbReference type="Proteomes" id="UP001154401">
    <property type="component" value="Chromosome"/>
</dbReference>
<dbReference type="GO" id="GO:0005829">
    <property type="term" value="C:cytosol"/>
    <property type="evidence" value="ECO:0007669"/>
    <property type="project" value="TreeGrafter"/>
</dbReference>
<dbReference type="GO" id="GO:0050660">
    <property type="term" value="F:flavin adenine dinucleotide binding"/>
    <property type="evidence" value="ECO:0007669"/>
    <property type="project" value="UniProtKB-UniRule"/>
</dbReference>
<dbReference type="GO" id="GO:0030488">
    <property type="term" value="P:tRNA methylation"/>
    <property type="evidence" value="ECO:0007669"/>
    <property type="project" value="TreeGrafter"/>
</dbReference>
<dbReference type="GO" id="GO:0002098">
    <property type="term" value="P:tRNA wobble uridine modification"/>
    <property type="evidence" value="ECO:0007669"/>
    <property type="project" value="InterPro"/>
</dbReference>
<dbReference type="FunFam" id="1.10.150.570:FF:000001">
    <property type="entry name" value="tRNA uridine 5-carboxymethylaminomethyl modification enzyme MnmG"/>
    <property type="match status" value="1"/>
</dbReference>
<dbReference type="FunFam" id="3.50.50.60:FF:000002">
    <property type="entry name" value="tRNA uridine 5-carboxymethylaminomethyl modification enzyme MnmG"/>
    <property type="match status" value="1"/>
</dbReference>
<dbReference type="FunFam" id="3.50.50.60:FF:000010">
    <property type="entry name" value="tRNA uridine 5-carboxymethylaminomethyl modification enzyme MnmG"/>
    <property type="match status" value="1"/>
</dbReference>
<dbReference type="Gene3D" id="3.50.50.60">
    <property type="entry name" value="FAD/NAD(P)-binding domain"/>
    <property type="match status" value="2"/>
</dbReference>
<dbReference type="Gene3D" id="1.10.150.570">
    <property type="entry name" value="GidA associated domain, C-terminal subdomain"/>
    <property type="match status" value="1"/>
</dbReference>
<dbReference type="Gene3D" id="1.10.10.1800">
    <property type="entry name" value="tRNA uridine 5-carboxymethylaminomethyl modification enzyme MnmG/GidA"/>
    <property type="match status" value="1"/>
</dbReference>
<dbReference type="HAMAP" id="MF_00129">
    <property type="entry name" value="MnmG_GidA"/>
    <property type="match status" value="1"/>
</dbReference>
<dbReference type="InterPro" id="IPR036188">
    <property type="entry name" value="FAD/NAD-bd_sf"/>
</dbReference>
<dbReference type="InterPro" id="IPR049312">
    <property type="entry name" value="GIDA_C_N"/>
</dbReference>
<dbReference type="InterPro" id="IPR004416">
    <property type="entry name" value="MnmG"/>
</dbReference>
<dbReference type="InterPro" id="IPR002218">
    <property type="entry name" value="MnmG-rel"/>
</dbReference>
<dbReference type="InterPro" id="IPR020595">
    <property type="entry name" value="MnmG-rel_CS"/>
</dbReference>
<dbReference type="InterPro" id="IPR026904">
    <property type="entry name" value="MnmG_C"/>
</dbReference>
<dbReference type="InterPro" id="IPR047001">
    <property type="entry name" value="MnmG_C_subdom"/>
</dbReference>
<dbReference type="InterPro" id="IPR044920">
    <property type="entry name" value="MnmG_C_subdom_sf"/>
</dbReference>
<dbReference type="InterPro" id="IPR040131">
    <property type="entry name" value="MnmG_N"/>
</dbReference>
<dbReference type="NCBIfam" id="TIGR00136">
    <property type="entry name" value="mnmG_gidA"/>
    <property type="match status" value="1"/>
</dbReference>
<dbReference type="PANTHER" id="PTHR11806">
    <property type="entry name" value="GLUCOSE INHIBITED DIVISION PROTEIN A"/>
    <property type="match status" value="1"/>
</dbReference>
<dbReference type="PANTHER" id="PTHR11806:SF0">
    <property type="entry name" value="PROTEIN MTO1 HOMOLOG, MITOCHONDRIAL"/>
    <property type="match status" value="1"/>
</dbReference>
<dbReference type="Pfam" id="PF01134">
    <property type="entry name" value="GIDA"/>
    <property type="match status" value="1"/>
</dbReference>
<dbReference type="Pfam" id="PF21680">
    <property type="entry name" value="GIDA_C_1st"/>
    <property type="match status" value="1"/>
</dbReference>
<dbReference type="Pfam" id="PF13932">
    <property type="entry name" value="SAM_GIDA_C"/>
    <property type="match status" value="1"/>
</dbReference>
<dbReference type="SMART" id="SM01228">
    <property type="entry name" value="GIDA_assoc_3"/>
    <property type="match status" value="1"/>
</dbReference>
<dbReference type="SUPFAM" id="SSF51905">
    <property type="entry name" value="FAD/NAD(P)-binding domain"/>
    <property type="match status" value="1"/>
</dbReference>
<dbReference type="PROSITE" id="PS01280">
    <property type="entry name" value="GIDA_1"/>
    <property type="match status" value="1"/>
</dbReference>
<dbReference type="PROSITE" id="PS01281">
    <property type="entry name" value="GIDA_2"/>
    <property type="match status" value="1"/>
</dbReference>
<sequence length="610" mass="67263">MWTFPVDYDVIVIGAGHAGCEAAYCAAKMGASVLLLTSNLDTIAKLSCNPAVGGIGKGHIVREIDALGGIMAEITDLSGIQFRILNQTKGPAVRAPRAQVDKQLYHIHMKRLLEQVPGLHIMQGTAEALLDNGEKVLGVSTKEGWAYLGKTVVLSSGTFMRGLIHIGTQNFSGGRLGDAASLGLSEDLKRLGFPLGRLKTGTPARLLASSIDFSVMEEQPGDHNVCFVHRNEMFVPTLPQVSCHITHTTDQTKDLITKNLHRSALYGGRIEGVGPRYCPSIEDKIVKFADKDRHHIFIEPEGLNTQEVYVNGLSTSMPFDVQYDIIRSVSGLENAIITRPAYAIEYDYVHGNVIFPSLESKLIEGLFLCGQINGTTGYEEAAAQGLIAGVNAVNKVLRRPPFVPSRQESYIGVMLDDLTTQVLDEPYRMFTSRAEHRLLLRQDNAGMRLSHYGHSLGLLSSERYAMFQEQKACIEQEKERLSKTFRKYGDTVVPLTRVLCRPEVSYQQLLTEFPADVRDLGPIVGASLEMEIKYSGYISRQQTLIRSMERSENISIPEDIDYHSISALSLEAREKLSKFTPRTIGSAARISGISVADIQVLMVSLKKDAH</sequence>
<feature type="chain" id="PRO_0000345253" description="tRNA uridine 5-carboxymethylaminomethyl modification enzyme MnmG">
    <location>
        <begin position="1"/>
        <end position="610"/>
    </location>
</feature>
<feature type="binding site" evidence="1">
    <location>
        <begin position="14"/>
        <end position="19"/>
    </location>
    <ligand>
        <name>FAD</name>
        <dbReference type="ChEBI" id="CHEBI:57692"/>
    </ligand>
</feature>
<feature type="binding site" evidence="1">
    <location>
        <begin position="274"/>
        <end position="288"/>
    </location>
    <ligand>
        <name>NAD(+)</name>
        <dbReference type="ChEBI" id="CHEBI:57540"/>
    </ligand>
</feature>
<organism>
    <name type="scientific">Chlamydia trachomatis serovar L2b (strain UCH-1/proctitis)</name>
    <dbReference type="NCBI Taxonomy" id="471473"/>
    <lineage>
        <taxon>Bacteria</taxon>
        <taxon>Pseudomonadati</taxon>
        <taxon>Chlamydiota</taxon>
        <taxon>Chlamydiia</taxon>
        <taxon>Chlamydiales</taxon>
        <taxon>Chlamydiaceae</taxon>
        <taxon>Chlamydia/Chlamydophila group</taxon>
        <taxon>Chlamydia</taxon>
    </lineage>
</organism>
<gene>
    <name evidence="1" type="primary">mnmG</name>
    <name evidence="1" type="synonym">gidA</name>
    <name type="ordered locus">CTLon_0755</name>
</gene>
<evidence type="ECO:0000255" key="1">
    <source>
        <dbReference type="HAMAP-Rule" id="MF_00129"/>
    </source>
</evidence>
<comment type="function">
    <text evidence="1">NAD-binding protein involved in the addition of a carboxymethylaminomethyl (cmnm) group at the wobble position (U34) of certain tRNAs, forming tRNA-cmnm(5)s(2)U34.</text>
</comment>
<comment type="cofactor">
    <cofactor evidence="1">
        <name>FAD</name>
        <dbReference type="ChEBI" id="CHEBI:57692"/>
    </cofactor>
</comment>
<comment type="subunit">
    <text evidence="1">Homodimer. Heterotetramer of two MnmE and two MnmG subunits.</text>
</comment>
<comment type="subcellular location">
    <subcellularLocation>
        <location evidence="1">Cytoplasm</location>
    </subcellularLocation>
</comment>
<comment type="similarity">
    <text evidence="1">Belongs to the MnmG family.</text>
</comment>
<accession>B0BCD7</accession>